<evidence type="ECO:0000250" key="1"/>
<evidence type="ECO:0000255" key="2"/>
<evidence type="ECO:0000269" key="3">
    <source>
    </source>
</evidence>
<evidence type="ECO:0000269" key="4">
    <source>
    </source>
</evidence>
<evidence type="ECO:0000305" key="5"/>
<gene>
    <name type="primary">ndhA</name>
    <name type="synonym">ndh1</name>
</gene>
<name>NU1C_MAIZE</name>
<proteinExistence type="evidence at transcript level"/>
<protein>
    <recommendedName>
        <fullName>NAD(P)H-quinone oxidoreductase subunit 1, chloroplastic</fullName>
        <ecNumber>7.1.1.-</ecNumber>
    </recommendedName>
    <alternativeName>
        <fullName>NAD(P)H dehydrogenase subunit 1</fullName>
        <shortName>NDH subunit 1</shortName>
    </alternativeName>
    <alternativeName>
        <fullName>NADH-plastoquinone oxidoreductase subunit 1</fullName>
    </alternativeName>
</protein>
<feature type="chain" id="PRO_0000117509" description="NAD(P)H-quinone oxidoreductase subunit 1, chloroplastic">
    <location>
        <begin position="1"/>
        <end position="362"/>
    </location>
</feature>
<feature type="transmembrane region" description="Helical" evidence="2">
    <location>
        <begin position="26"/>
        <end position="48"/>
    </location>
</feature>
<feature type="transmembrane region" description="Helical" evidence="2">
    <location>
        <begin position="97"/>
        <end position="119"/>
    </location>
</feature>
<feature type="transmembrane region" description="Helical" evidence="2">
    <location>
        <begin position="126"/>
        <end position="148"/>
    </location>
</feature>
<feature type="transmembrane region" description="Helical" evidence="2">
    <location>
        <begin position="163"/>
        <end position="185"/>
    </location>
</feature>
<feature type="transmembrane region" description="Helical" evidence="2">
    <location>
        <begin position="254"/>
        <end position="276"/>
    </location>
</feature>
<feature type="transmembrane region" description="Helical" evidence="2">
    <location>
        <begin position="296"/>
        <end position="318"/>
    </location>
</feature>
<feature type="transmembrane region" description="Helical" evidence="2">
    <location>
        <begin position="338"/>
        <end position="360"/>
    </location>
</feature>
<organism>
    <name type="scientific">Zea mays</name>
    <name type="common">Maize</name>
    <dbReference type="NCBI Taxonomy" id="4577"/>
    <lineage>
        <taxon>Eukaryota</taxon>
        <taxon>Viridiplantae</taxon>
        <taxon>Streptophyta</taxon>
        <taxon>Embryophyta</taxon>
        <taxon>Tracheophyta</taxon>
        <taxon>Spermatophyta</taxon>
        <taxon>Magnoliopsida</taxon>
        <taxon>Liliopsida</taxon>
        <taxon>Poales</taxon>
        <taxon>Poaceae</taxon>
        <taxon>PACMAD clade</taxon>
        <taxon>Panicoideae</taxon>
        <taxon>Andropogonodae</taxon>
        <taxon>Andropogoneae</taxon>
        <taxon>Tripsacinae</taxon>
        <taxon>Zea</taxon>
    </lineage>
</organism>
<accession>P25706</accession>
<dbReference type="EC" id="7.1.1.-"/>
<dbReference type="EMBL" id="X62370">
    <property type="protein sequence ID" value="CAA44228.1"/>
    <property type="molecule type" value="Genomic_DNA"/>
</dbReference>
<dbReference type="EMBL" id="X86563">
    <property type="protein sequence ID" value="CAA60353.1"/>
    <property type="molecule type" value="Genomic_DNA"/>
</dbReference>
<dbReference type="EMBL" id="X56521">
    <property type="protein sequence ID" value="CAA39869.1"/>
    <property type="molecule type" value="Genomic_DNA"/>
</dbReference>
<dbReference type="PIR" id="JQ1671">
    <property type="entry name" value="JQ1671"/>
</dbReference>
<dbReference type="RefSeq" id="NP_043092.1">
    <property type="nucleotide sequence ID" value="NC_001666.2"/>
</dbReference>
<dbReference type="SMR" id="P25706"/>
<dbReference type="FunCoup" id="P25706">
    <property type="interactions" value="26"/>
</dbReference>
<dbReference type="STRING" id="4577.P25706"/>
<dbReference type="PaxDb" id="4577-GRMZM5G874448_P01"/>
<dbReference type="GeneID" id="845179"/>
<dbReference type="KEGG" id="zma:845179"/>
<dbReference type="MaizeGDB" id="69243"/>
<dbReference type="eggNOG" id="KOG4770">
    <property type="taxonomic scope" value="Eukaryota"/>
</dbReference>
<dbReference type="InParanoid" id="P25706"/>
<dbReference type="OrthoDB" id="1913704at2759"/>
<dbReference type="Proteomes" id="UP000007305">
    <property type="component" value="Chloroplast"/>
</dbReference>
<dbReference type="GO" id="GO:0009535">
    <property type="term" value="C:chloroplast thylakoid membrane"/>
    <property type="evidence" value="ECO:0007669"/>
    <property type="project" value="UniProtKB-SubCell"/>
</dbReference>
<dbReference type="GO" id="GO:0016655">
    <property type="term" value="F:oxidoreductase activity, acting on NAD(P)H, quinone or similar compound as acceptor"/>
    <property type="evidence" value="ECO:0007669"/>
    <property type="project" value="UniProtKB-UniRule"/>
</dbReference>
<dbReference type="GO" id="GO:0048038">
    <property type="term" value="F:quinone binding"/>
    <property type="evidence" value="ECO:0007669"/>
    <property type="project" value="UniProtKB-KW"/>
</dbReference>
<dbReference type="GO" id="GO:0009060">
    <property type="term" value="P:aerobic respiration"/>
    <property type="evidence" value="ECO:0000318"/>
    <property type="project" value="GO_Central"/>
</dbReference>
<dbReference type="GO" id="GO:0019684">
    <property type="term" value="P:photosynthesis, light reaction"/>
    <property type="evidence" value="ECO:0007669"/>
    <property type="project" value="UniProtKB-UniRule"/>
</dbReference>
<dbReference type="HAMAP" id="MF_01350">
    <property type="entry name" value="NDH1_NuoH"/>
    <property type="match status" value="1"/>
</dbReference>
<dbReference type="InterPro" id="IPR001694">
    <property type="entry name" value="NADH_UbQ_OxRdtase_su1/FPO"/>
</dbReference>
<dbReference type="InterPro" id="IPR018086">
    <property type="entry name" value="NADH_UbQ_OxRdtase_su1_CS"/>
</dbReference>
<dbReference type="NCBIfam" id="NF004741">
    <property type="entry name" value="PRK06076.1-2"/>
    <property type="match status" value="1"/>
</dbReference>
<dbReference type="PANTHER" id="PTHR11432">
    <property type="entry name" value="NADH DEHYDROGENASE SUBUNIT 1"/>
    <property type="match status" value="1"/>
</dbReference>
<dbReference type="PANTHER" id="PTHR11432:SF3">
    <property type="entry name" value="NADH-UBIQUINONE OXIDOREDUCTASE CHAIN 1"/>
    <property type="match status" value="1"/>
</dbReference>
<dbReference type="Pfam" id="PF00146">
    <property type="entry name" value="NADHdh"/>
    <property type="match status" value="1"/>
</dbReference>
<dbReference type="PROSITE" id="PS00667">
    <property type="entry name" value="COMPLEX1_ND1_1"/>
    <property type="match status" value="1"/>
</dbReference>
<dbReference type="PROSITE" id="PS00668">
    <property type="entry name" value="COMPLEX1_ND1_2"/>
    <property type="match status" value="1"/>
</dbReference>
<keyword id="KW-0150">Chloroplast</keyword>
<keyword id="KW-0472">Membrane</keyword>
<keyword id="KW-0520">NAD</keyword>
<keyword id="KW-0521">NADP</keyword>
<keyword id="KW-0934">Plastid</keyword>
<keyword id="KW-0618">Plastoquinone</keyword>
<keyword id="KW-0874">Quinone</keyword>
<keyword id="KW-1185">Reference proteome</keyword>
<keyword id="KW-0691">RNA editing</keyword>
<keyword id="KW-0793">Thylakoid</keyword>
<keyword id="KW-1278">Translocase</keyword>
<keyword id="KW-0812">Transmembrane</keyword>
<keyword id="KW-1133">Transmembrane helix</keyword>
<comment type="function">
    <text evidence="1">NDH shuttles electrons from NAD(P)H:plastoquinone, via FMN and iron-sulfur (Fe-S) centers, to quinones in the photosynthetic chain and possibly in a chloroplast respiratory chain. The immediate electron acceptor for the enzyme in this species is believed to be plastoquinone. Couples the redox reaction to proton translocation, and thus conserves the redox energy in a proton gradient (By similarity).</text>
</comment>
<comment type="catalytic activity">
    <reaction>
        <text>a plastoquinone + NADH + (n+1) H(+)(in) = a plastoquinol + NAD(+) + n H(+)(out)</text>
        <dbReference type="Rhea" id="RHEA:42608"/>
        <dbReference type="Rhea" id="RHEA-COMP:9561"/>
        <dbReference type="Rhea" id="RHEA-COMP:9562"/>
        <dbReference type="ChEBI" id="CHEBI:15378"/>
        <dbReference type="ChEBI" id="CHEBI:17757"/>
        <dbReference type="ChEBI" id="CHEBI:57540"/>
        <dbReference type="ChEBI" id="CHEBI:57945"/>
        <dbReference type="ChEBI" id="CHEBI:62192"/>
    </reaction>
</comment>
<comment type="catalytic activity">
    <reaction>
        <text>a plastoquinone + NADPH + (n+1) H(+)(in) = a plastoquinol + NADP(+) + n H(+)(out)</text>
        <dbReference type="Rhea" id="RHEA:42612"/>
        <dbReference type="Rhea" id="RHEA-COMP:9561"/>
        <dbReference type="Rhea" id="RHEA-COMP:9562"/>
        <dbReference type="ChEBI" id="CHEBI:15378"/>
        <dbReference type="ChEBI" id="CHEBI:17757"/>
        <dbReference type="ChEBI" id="CHEBI:57783"/>
        <dbReference type="ChEBI" id="CHEBI:58349"/>
        <dbReference type="ChEBI" id="CHEBI:62192"/>
    </reaction>
</comment>
<comment type="subunit">
    <text evidence="1">NDH is composed of at least 16 different subunits, 5 of which are encoded in the nucleus.</text>
</comment>
<comment type="subcellular location">
    <subcellularLocation>
        <location evidence="1">Plastid</location>
        <location evidence="1">Chloroplast thylakoid membrane</location>
        <topology evidence="1">Multi-pass membrane protein</topology>
    </subcellularLocation>
</comment>
<comment type="RNA editing">
    <location>
        <position position="17" evidence="3 4"/>
    </location>
    <location>
        <position position="158" evidence="3 4"/>
    </location>
    <location>
        <position position="188" evidence="3 4"/>
    </location>
    <location>
        <position position="357" evidence="3"/>
    </location>
</comment>
<comment type="similarity">
    <text evidence="5">Belongs to the complex I subunit 1 family.</text>
</comment>
<sequence length="362" mass="40511">MIIDRVEVETINSFSKLELFKEIYGLIWILPIFALLLGITIEVLVIVWLEREISASIQQRIGPEYAGPLGLLQAIADGTKLLLKEDILPSRGDIPLFSIGPSIAVISILLSFLVIPLGYRFVLADLSIGVFLWIAISSIAPIGLLMAGYSSNNKYSFLGGLRAAAQSISYEIPLTFCVLAISLLSNSLSTVDIVEAQSKYGFFGWNLWRQPIGFLVFLISSLAECERLPFDLPEAEEELVAGYQTEYSGIKYGLFYLVSYLNLLVSSLFVTVLYLGGWNFSIPYISFFGFFQMNKIIGILEMVIGIFITLTKAYLFLFISITIRWTLPRMRMDQLLNLGWKFLLPISLGNLLLTTSFQLVSL</sequence>
<reference key="1">
    <citation type="journal article" date="1992" name="Plant Cell">
        <title>Internal editing of the maize chloroplast ndhA transcript restores codons for conserved amino acids.</title>
        <authorList>
            <person name="Maier R.M."/>
            <person name="Hoch B."/>
            <person name="Zeltz P."/>
            <person name="Koessel H."/>
        </authorList>
    </citation>
    <scope>NUCLEOTIDE SEQUENCE [GENOMIC DNA]</scope>
    <scope>RNA EDITING OF POSITIONS 17; 158; 188 AND 357</scope>
</reference>
<reference key="2">
    <citation type="journal article" date="1995" name="J. Mol. Biol.">
        <title>Complete sequence of the maize chloroplast genome: gene content, hotspots of divergence and fine tuning of genetic information by transcript editing.</title>
        <authorList>
            <person name="Maier R.M."/>
            <person name="Neckermann K."/>
            <person name="Igloi G.L."/>
            <person name="Koessel H."/>
        </authorList>
    </citation>
    <scope>NUCLEOTIDE SEQUENCE [LARGE SCALE GENOMIC DNA]</scope>
    <source>
        <strain>cv. B73</strain>
    </source>
</reference>
<reference key="3">
    <citation type="journal article" date="1990" name="Curr. Genet.">
        <title>The ndhH genes of gramminean plastomes are linked with the junctions between small single copy and inverted repeat regions.</title>
        <authorList>
            <person name="Maier R.M."/>
            <person name="Doery I."/>
            <person name="Igloi G."/>
            <person name="Koessel H."/>
        </authorList>
    </citation>
    <scope>NUCLEOTIDE SEQUENCE [GENOMIC DNA] OF 1-16</scope>
</reference>
<reference key="4">
    <citation type="journal article" date="2006" name="J. Plant Physiol.">
        <title>Studies of the Ndh complex and photosystem II from mesophyll and bundle sheath chloroplasts of the C(4)-type plant Zea mays.</title>
        <authorList>
            <person name="Darie C.C."/>
            <person name="De Pascalis L."/>
            <person name="Mutschler B."/>
            <person name="Haehnel W."/>
        </authorList>
    </citation>
    <scope>RNA EDITING OF POSITIONS 17; 158 AND 188</scope>
</reference>
<geneLocation type="chloroplast"/>